<name>CHED_CERS1</name>
<reference key="1">
    <citation type="submission" date="2007-02" db="EMBL/GenBank/DDBJ databases">
        <title>Complete sequence of chromosome 1 of Rhodobacter sphaeroides ATCC 17029.</title>
        <authorList>
            <person name="Copeland A."/>
            <person name="Lucas S."/>
            <person name="Lapidus A."/>
            <person name="Barry K."/>
            <person name="Detter J.C."/>
            <person name="Glavina del Rio T."/>
            <person name="Hammon N."/>
            <person name="Israni S."/>
            <person name="Dalin E."/>
            <person name="Tice H."/>
            <person name="Pitluck S."/>
            <person name="Kiss H."/>
            <person name="Brettin T."/>
            <person name="Bruce D."/>
            <person name="Han C."/>
            <person name="Tapia R."/>
            <person name="Gilna P."/>
            <person name="Schmutz J."/>
            <person name="Larimer F."/>
            <person name="Land M."/>
            <person name="Hauser L."/>
            <person name="Kyrpides N."/>
            <person name="Mikhailova N."/>
            <person name="Richardson P."/>
            <person name="Mackenzie C."/>
            <person name="Choudhary M."/>
            <person name="Donohue T.J."/>
            <person name="Kaplan S."/>
        </authorList>
    </citation>
    <scope>NUCLEOTIDE SEQUENCE [LARGE SCALE GENOMIC DNA]</scope>
    <source>
        <strain>ATCC 17029 / ATH 2.4.9</strain>
    </source>
</reference>
<gene>
    <name evidence="1" type="primary">cheD</name>
    <name type="ordered locus">Rsph17029_1103</name>
</gene>
<feature type="chain" id="PRO_1000068558" description="Probable chemoreceptor glutamine deamidase CheD">
    <location>
        <begin position="1"/>
        <end position="199"/>
    </location>
</feature>
<organism>
    <name type="scientific">Cereibacter sphaeroides (strain ATCC 17029 / ATH 2.4.9)</name>
    <name type="common">Rhodobacter sphaeroides</name>
    <dbReference type="NCBI Taxonomy" id="349101"/>
    <lineage>
        <taxon>Bacteria</taxon>
        <taxon>Pseudomonadati</taxon>
        <taxon>Pseudomonadota</taxon>
        <taxon>Alphaproteobacteria</taxon>
        <taxon>Rhodobacterales</taxon>
        <taxon>Paracoccaceae</taxon>
        <taxon>Cereibacter</taxon>
    </lineage>
</organism>
<keyword id="KW-0145">Chemotaxis</keyword>
<keyword id="KW-0378">Hydrolase</keyword>
<proteinExistence type="inferred from homology"/>
<sequence length="199" mass="21673">MTRCDDRPSASQISITHVTQGSCVASASPNEVYATILGSCICTCMCDPVAGVGGMNHFLLPSADVEDAQHLRYGSHAMELLINALLKLGAARQRIEAKIFGGAMMTPQLGAIGQANAAFARRYLRDEGIRCTAHSLGGNRARRIRFWPKTGRVQQMFLGSEDVVPNEQPQFRLQGGAGDVTFFDRHNNAEMPDPIKEPR</sequence>
<accession>A3PIP7</accession>
<protein>
    <recommendedName>
        <fullName evidence="1">Probable chemoreceptor glutamine deamidase CheD</fullName>
        <ecNumber evidence="1">3.5.1.44</ecNumber>
    </recommendedName>
</protein>
<comment type="function">
    <text evidence="1">Probably deamidates glutamine residues to glutamate on methyl-accepting chemotaxis receptors (MCPs), playing an important role in chemotaxis.</text>
</comment>
<comment type="catalytic activity">
    <reaction evidence="1">
        <text>L-glutaminyl-[protein] + H2O = L-glutamyl-[protein] + NH4(+)</text>
        <dbReference type="Rhea" id="RHEA:16441"/>
        <dbReference type="Rhea" id="RHEA-COMP:10207"/>
        <dbReference type="Rhea" id="RHEA-COMP:10208"/>
        <dbReference type="ChEBI" id="CHEBI:15377"/>
        <dbReference type="ChEBI" id="CHEBI:28938"/>
        <dbReference type="ChEBI" id="CHEBI:29973"/>
        <dbReference type="ChEBI" id="CHEBI:30011"/>
        <dbReference type="EC" id="3.5.1.44"/>
    </reaction>
</comment>
<comment type="similarity">
    <text evidence="1">Belongs to the CheD family.</text>
</comment>
<dbReference type="EC" id="3.5.1.44" evidence="1"/>
<dbReference type="EMBL" id="CP000577">
    <property type="protein sequence ID" value="ABN76213.1"/>
    <property type="molecule type" value="Genomic_DNA"/>
</dbReference>
<dbReference type="SMR" id="A3PIP7"/>
<dbReference type="KEGG" id="rsh:Rsph17029_1103"/>
<dbReference type="HOGENOM" id="CLU_087854_0_1_5"/>
<dbReference type="GO" id="GO:0050568">
    <property type="term" value="F:protein-glutamine glutaminase activity"/>
    <property type="evidence" value="ECO:0007669"/>
    <property type="project" value="UniProtKB-UniRule"/>
</dbReference>
<dbReference type="GO" id="GO:0006935">
    <property type="term" value="P:chemotaxis"/>
    <property type="evidence" value="ECO:0007669"/>
    <property type="project" value="UniProtKB-UniRule"/>
</dbReference>
<dbReference type="CDD" id="cd16352">
    <property type="entry name" value="CheD"/>
    <property type="match status" value="1"/>
</dbReference>
<dbReference type="Gene3D" id="3.30.1330.200">
    <property type="match status" value="1"/>
</dbReference>
<dbReference type="HAMAP" id="MF_01440">
    <property type="entry name" value="CheD"/>
    <property type="match status" value="1"/>
</dbReference>
<dbReference type="InterPro" id="IPR038592">
    <property type="entry name" value="CheD-like_sf"/>
</dbReference>
<dbReference type="InterPro" id="IPR005659">
    <property type="entry name" value="Chemorcpt_Glu_NH3ase_CheD"/>
</dbReference>
<dbReference type="InterPro" id="IPR011324">
    <property type="entry name" value="Cytotoxic_necrot_fac-like_cat"/>
</dbReference>
<dbReference type="PANTHER" id="PTHR35147">
    <property type="entry name" value="CHEMORECEPTOR GLUTAMINE DEAMIDASE CHED-RELATED"/>
    <property type="match status" value="1"/>
</dbReference>
<dbReference type="PANTHER" id="PTHR35147:SF2">
    <property type="entry name" value="CHEMORECEPTOR GLUTAMINE DEAMIDASE CHED-RELATED"/>
    <property type="match status" value="1"/>
</dbReference>
<dbReference type="Pfam" id="PF03975">
    <property type="entry name" value="CheD"/>
    <property type="match status" value="1"/>
</dbReference>
<dbReference type="SUPFAM" id="SSF64438">
    <property type="entry name" value="CNF1/YfiH-like putative cysteine hydrolases"/>
    <property type="match status" value="1"/>
</dbReference>
<evidence type="ECO:0000255" key="1">
    <source>
        <dbReference type="HAMAP-Rule" id="MF_01440"/>
    </source>
</evidence>